<dbReference type="EMBL" id="AE009951">
    <property type="protein sequence ID" value="AAL95315.1"/>
    <property type="molecule type" value="Genomic_DNA"/>
</dbReference>
<dbReference type="RefSeq" id="NP_604016.1">
    <property type="nucleotide sequence ID" value="NC_003454.1"/>
</dbReference>
<dbReference type="RefSeq" id="WP_005902873.1">
    <property type="nucleotide sequence ID" value="NZ_OZ209243.1"/>
</dbReference>
<dbReference type="SMR" id="Q8REI3"/>
<dbReference type="FunCoup" id="Q8REI3">
    <property type="interactions" value="327"/>
</dbReference>
<dbReference type="STRING" id="190304.FN1119"/>
<dbReference type="PaxDb" id="190304-FN1119"/>
<dbReference type="EnsemblBacteria" id="AAL95315">
    <property type="protein sequence ID" value="AAL95315"/>
    <property type="gene ID" value="FN1119"/>
</dbReference>
<dbReference type="GeneID" id="79784099"/>
<dbReference type="KEGG" id="fnu:FN1119"/>
<dbReference type="PATRIC" id="fig|190304.8.peg.1684"/>
<dbReference type="eggNOG" id="COG0211">
    <property type="taxonomic scope" value="Bacteria"/>
</dbReference>
<dbReference type="HOGENOM" id="CLU_095424_4_0_0"/>
<dbReference type="InParanoid" id="Q8REI3"/>
<dbReference type="BioCyc" id="FNUC190304:G1FZS-1699-MONOMER"/>
<dbReference type="Proteomes" id="UP000002521">
    <property type="component" value="Chromosome"/>
</dbReference>
<dbReference type="GO" id="GO:0022625">
    <property type="term" value="C:cytosolic large ribosomal subunit"/>
    <property type="evidence" value="ECO:0000318"/>
    <property type="project" value="GO_Central"/>
</dbReference>
<dbReference type="GO" id="GO:0003735">
    <property type="term" value="F:structural constituent of ribosome"/>
    <property type="evidence" value="ECO:0000318"/>
    <property type="project" value="GO_Central"/>
</dbReference>
<dbReference type="GO" id="GO:0006412">
    <property type="term" value="P:translation"/>
    <property type="evidence" value="ECO:0007669"/>
    <property type="project" value="UniProtKB-UniRule"/>
</dbReference>
<dbReference type="FunFam" id="2.40.50.100:FF:000038">
    <property type="entry name" value="50S ribosomal protein L27"/>
    <property type="match status" value="1"/>
</dbReference>
<dbReference type="Gene3D" id="2.40.50.100">
    <property type="match status" value="1"/>
</dbReference>
<dbReference type="HAMAP" id="MF_00539">
    <property type="entry name" value="Ribosomal_bL27"/>
    <property type="match status" value="1"/>
</dbReference>
<dbReference type="InterPro" id="IPR001684">
    <property type="entry name" value="Ribosomal_bL27"/>
</dbReference>
<dbReference type="InterPro" id="IPR018261">
    <property type="entry name" value="Ribosomal_bL27_CS"/>
</dbReference>
<dbReference type="NCBIfam" id="TIGR00062">
    <property type="entry name" value="L27"/>
    <property type="match status" value="1"/>
</dbReference>
<dbReference type="PANTHER" id="PTHR15893:SF0">
    <property type="entry name" value="LARGE RIBOSOMAL SUBUNIT PROTEIN BL27M"/>
    <property type="match status" value="1"/>
</dbReference>
<dbReference type="PANTHER" id="PTHR15893">
    <property type="entry name" value="RIBOSOMAL PROTEIN L27"/>
    <property type="match status" value="1"/>
</dbReference>
<dbReference type="Pfam" id="PF01016">
    <property type="entry name" value="Ribosomal_L27"/>
    <property type="match status" value="1"/>
</dbReference>
<dbReference type="PRINTS" id="PR00063">
    <property type="entry name" value="RIBOSOMALL27"/>
</dbReference>
<dbReference type="SUPFAM" id="SSF110324">
    <property type="entry name" value="Ribosomal L27 protein-like"/>
    <property type="match status" value="1"/>
</dbReference>
<dbReference type="PROSITE" id="PS00831">
    <property type="entry name" value="RIBOSOMAL_L27"/>
    <property type="match status" value="1"/>
</dbReference>
<sequence>MQFLFNIQLFAHKKGQGSVKNGRDSNPKYLGVKKYDGEVVKAGNIIVRQRGTKYHAGNNMGIGKDHTLFALIDGYVKFERLGKNKKQISIYSEK</sequence>
<protein>
    <recommendedName>
        <fullName evidence="2">Large ribosomal subunit protein bL27</fullName>
    </recommendedName>
    <alternativeName>
        <fullName evidence="3">50S ribosomal protein L27</fullName>
    </alternativeName>
</protein>
<organism>
    <name type="scientific">Fusobacterium nucleatum subsp. nucleatum (strain ATCC 25586 / DSM 15643 / BCRC 10681 / CIP 101130 / JCM 8532 / KCTC 2640 / LMG 13131 / VPI 4355)</name>
    <dbReference type="NCBI Taxonomy" id="190304"/>
    <lineage>
        <taxon>Bacteria</taxon>
        <taxon>Fusobacteriati</taxon>
        <taxon>Fusobacteriota</taxon>
        <taxon>Fusobacteriia</taxon>
        <taxon>Fusobacteriales</taxon>
        <taxon>Fusobacteriaceae</taxon>
        <taxon>Fusobacterium</taxon>
    </lineage>
</organism>
<gene>
    <name evidence="2" type="primary">rpmA</name>
    <name type="ordered locus">FN1119</name>
</gene>
<evidence type="ECO:0000250" key="1">
    <source>
        <dbReference type="UniProtKB" id="Q2FXT0"/>
    </source>
</evidence>
<evidence type="ECO:0000255" key="2">
    <source>
        <dbReference type="HAMAP-Rule" id="MF_00539"/>
    </source>
</evidence>
<evidence type="ECO:0000305" key="3"/>
<keyword id="KW-1185">Reference proteome</keyword>
<keyword id="KW-0687">Ribonucleoprotein</keyword>
<keyword id="KW-0689">Ribosomal protein</keyword>
<accession>Q8REI3</accession>
<feature type="propeptide" id="PRO_0000459896" evidence="1">
    <location>
        <begin position="1"/>
        <end position="10"/>
    </location>
</feature>
<feature type="chain" id="PRO_0000181091" description="Large ribosomal subunit protein bL27">
    <location>
        <begin position="11"/>
        <end position="94"/>
    </location>
</feature>
<name>RL27_FUSNN</name>
<proteinExistence type="inferred from homology"/>
<comment type="PTM">
    <text evidence="1">The N-terminus is cleaved by ribosomal processing cysteine protease Prp.</text>
</comment>
<comment type="similarity">
    <text evidence="2">Belongs to the bacterial ribosomal protein bL27 family.</text>
</comment>
<reference key="1">
    <citation type="journal article" date="2002" name="J. Bacteriol.">
        <title>Genome sequence and analysis of the oral bacterium Fusobacterium nucleatum strain ATCC 25586.</title>
        <authorList>
            <person name="Kapatral V."/>
            <person name="Anderson I."/>
            <person name="Ivanova N."/>
            <person name="Reznik G."/>
            <person name="Los T."/>
            <person name="Lykidis A."/>
            <person name="Bhattacharyya A."/>
            <person name="Bartman A."/>
            <person name="Gardner W."/>
            <person name="Grechkin G."/>
            <person name="Zhu L."/>
            <person name="Vasieva O."/>
            <person name="Chu L."/>
            <person name="Kogan Y."/>
            <person name="Chaga O."/>
            <person name="Goltsman E."/>
            <person name="Bernal A."/>
            <person name="Larsen N."/>
            <person name="D'Souza M."/>
            <person name="Walunas T."/>
            <person name="Pusch G."/>
            <person name="Haselkorn R."/>
            <person name="Fonstein M."/>
            <person name="Kyrpides N.C."/>
            <person name="Overbeek R."/>
        </authorList>
    </citation>
    <scope>NUCLEOTIDE SEQUENCE [LARGE SCALE GENOMIC DNA]</scope>
    <source>
        <strain>ATCC 25586 / DSM 15643 / BCRC 10681 / CIP 101130 / JCM 8532 / KCTC 2640 / LMG 13131 / VPI 4355</strain>
    </source>
</reference>